<accession>Q5V6G0</accession>
<geneLocation type="plasmid">
    <name>pNG700</name>
</geneLocation>
<proteinExistence type="inferred from homology"/>
<evidence type="ECO:0000255" key="1">
    <source>
        <dbReference type="HAMAP-Rule" id="MF_01407"/>
    </source>
</evidence>
<name>CDC6K_HALMA</name>
<gene>
    <name type="primary">cdc6k</name>
    <name type="ordered locus">pNG7187</name>
</gene>
<reference key="1">
    <citation type="journal article" date="2004" name="Genome Res.">
        <title>Genome sequence of Haloarcula marismortui: a halophilic archaeon from the Dead Sea.</title>
        <authorList>
            <person name="Baliga N.S."/>
            <person name="Bonneau R."/>
            <person name="Facciotti M.T."/>
            <person name="Pan M."/>
            <person name="Glusman G."/>
            <person name="Deutsch E.W."/>
            <person name="Shannon P."/>
            <person name="Chiu Y."/>
            <person name="Weng R.S."/>
            <person name="Gan R.R."/>
            <person name="Hung P."/>
            <person name="Date S.V."/>
            <person name="Marcotte E."/>
            <person name="Hood L."/>
            <person name="Ng W.V."/>
        </authorList>
    </citation>
    <scope>NUCLEOTIDE SEQUENCE [LARGE SCALE GENOMIC DNA]</scope>
    <source>
        <strain>ATCC 43049 / DSM 3752 / JCM 8966 / VKM B-1809</strain>
    </source>
</reference>
<protein>
    <recommendedName>
        <fullName evidence="1">ORC1-type DNA replication protein 11</fullName>
    </recommendedName>
</protein>
<comment type="function">
    <text evidence="1">Involved in regulation of DNA replication.</text>
</comment>
<comment type="similarity">
    <text evidence="1">Belongs to the CDC6/cdc18 family.</text>
</comment>
<feature type="chain" id="PRO_0000150995" description="ORC1-type DNA replication protein 11">
    <location>
        <begin position="1"/>
        <end position="414"/>
    </location>
</feature>
<feature type="binding site" evidence="1">
    <location>
        <begin position="60"/>
        <end position="64"/>
    </location>
    <ligand>
        <name>ATP</name>
        <dbReference type="ChEBI" id="CHEBI:30616"/>
    </ligand>
</feature>
<feature type="binding site" evidence="1">
    <location>
        <position position="207"/>
    </location>
    <ligand>
        <name>ATP</name>
        <dbReference type="ChEBI" id="CHEBI:30616"/>
    </ligand>
</feature>
<feature type="binding site" evidence="1">
    <location>
        <position position="219"/>
    </location>
    <ligand>
        <name>ATP</name>
        <dbReference type="ChEBI" id="CHEBI:30616"/>
    </ligand>
</feature>
<organism>
    <name type="scientific">Haloarcula marismortui (strain ATCC 43049 / DSM 3752 / JCM 8966 / VKM B-1809)</name>
    <name type="common">Halobacterium marismortui</name>
    <dbReference type="NCBI Taxonomy" id="272569"/>
    <lineage>
        <taxon>Archaea</taxon>
        <taxon>Methanobacteriati</taxon>
        <taxon>Methanobacteriota</taxon>
        <taxon>Stenosarchaea group</taxon>
        <taxon>Halobacteria</taxon>
        <taxon>Halobacteriales</taxon>
        <taxon>Haloarculaceae</taxon>
        <taxon>Haloarcula</taxon>
    </lineage>
</organism>
<dbReference type="EMBL" id="AY596296">
    <property type="protein sequence ID" value="AAV44892.1"/>
    <property type="molecule type" value="Genomic_DNA"/>
</dbReference>
<dbReference type="RefSeq" id="WP_004965595.1">
    <property type="nucleotide sequence ID" value="NZ_CP039137.1"/>
</dbReference>
<dbReference type="SMR" id="Q5V6G0"/>
<dbReference type="EnsemblBacteria" id="AAV44892">
    <property type="protein sequence ID" value="AAV44892"/>
    <property type="gene ID" value="pNG7187"/>
</dbReference>
<dbReference type="KEGG" id="hma:pNG7187"/>
<dbReference type="PATRIC" id="fig|272569.17.peg.624"/>
<dbReference type="HOGENOM" id="CLU_025112_3_1_2"/>
<dbReference type="Proteomes" id="UP000001169">
    <property type="component" value="Plasmid pNG700"/>
</dbReference>
<dbReference type="GO" id="GO:0005524">
    <property type="term" value="F:ATP binding"/>
    <property type="evidence" value="ECO:0007669"/>
    <property type="project" value="UniProtKB-UniRule"/>
</dbReference>
<dbReference type="GO" id="GO:0016887">
    <property type="term" value="F:ATP hydrolysis activity"/>
    <property type="evidence" value="ECO:0007669"/>
    <property type="project" value="InterPro"/>
</dbReference>
<dbReference type="GO" id="GO:0006260">
    <property type="term" value="P:DNA replication"/>
    <property type="evidence" value="ECO:0007669"/>
    <property type="project" value="UniProtKB-UniRule"/>
</dbReference>
<dbReference type="CDD" id="cd08768">
    <property type="entry name" value="Cdc6_C"/>
    <property type="match status" value="1"/>
</dbReference>
<dbReference type="FunFam" id="1.10.8.60:FF:000073">
    <property type="entry name" value="ORC1-type DNA replication protein"/>
    <property type="match status" value="1"/>
</dbReference>
<dbReference type="Gene3D" id="1.10.8.60">
    <property type="match status" value="1"/>
</dbReference>
<dbReference type="Gene3D" id="3.40.50.300">
    <property type="entry name" value="P-loop containing nucleotide triphosphate hydrolases"/>
    <property type="match status" value="1"/>
</dbReference>
<dbReference type="Gene3D" id="1.10.10.10">
    <property type="entry name" value="Winged helix-like DNA-binding domain superfamily/Winged helix DNA-binding domain"/>
    <property type="match status" value="1"/>
</dbReference>
<dbReference type="HAMAP" id="MF_01407">
    <property type="entry name" value="ORC1_type_DNA_replic_protein"/>
    <property type="match status" value="1"/>
</dbReference>
<dbReference type="InterPro" id="IPR049945">
    <property type="entry name" value="AAA_22"/>
</dbReference>
<dbReference type="InterPro" id="IPR015163">
    <property type="entry name" value="Cdc6_C"/>
</dbReference>
<dbReference type="InterPro" id="IPR055237">
    <property type="entry name" value="Cdc6_lid"/>
</dbReference>
<dbReference type="InterPro" id="IPR050311">
    <property type="entry name" value="ORC1/CDC6"/>
</dbReference>
<dbReference type="InterPro" id="IPR014277">
    <property type="entry name" value="Orc1/Cdc6_arc"/>
</dbReference>
<dbReference type="InterPro" id="IPR027417">
    <property type="entry name" value="P-loop_NTPase"/>
</dbReference>
<dbReference type="InterPro" id="IPR036388">
    <property type="entry name" value="WH-like_DNA-bd_sf"/>
</dbReference>
<dbReference type="InterPro" id="IPR036390">
    <property type="entry name" value="WH_DNA-bd_sf"/>
</dbReference>
<dbReference type="NCBIfam" id="TIGR02928">
    <property type="entry name" value="orc1/cdc6 family replication initiation protein"/>
    <property type="match status" value="1"/>
</dbReference>
<dbReference type="PANTHER" id="PTHR10763">
    <property type="entry name" value="CELL DIVISION CONTROL PROTEIN 6-RELATED"/>
    <property type="match status" value="1"/>
</dbReference>
<dbReference type="PANTHER" id="PTHR10763:SF22">
    <property type="entry name" value="ORC1-TYPE DNA REPLICATION PROTEIN"/>
    <property type="match status" value="1"/>
</dbReference>
<dbReference type="Pfam" id="PF13401">
    <property type="entry name" value="AAA_22"/>
    <property type="match status" value="1"/>
</dbReference>
<dbReference type="Pfam" id="PF09079">
    <property type="entry name" value="Cdc6_C"/>
    <property type="match status" value="1"/>
</dbReference>
<dbReference type="Pfam" id="PF22703">
    <property type="entry name" value="Cdc6_lid"/>
    <property type="match status" value="1"/>
</dbReference>
<dbReference type="SMART" id="SM01074">
    <property type="entry name" value="Cdc6_C"/>
    <property type="match status" value="1"/>
</dbReference>
<dbReference type="SUPFAM" id="SSF52540">
    <property type="entry name" value="P-loop containing nucleoside triphosphate hydrolases"/>
    <property type="match status" value="1"/>
</dbReference>
<dbReference type="SUPFAM" id="SSF46785">
    <property type="entry name" value="Winged helix' DNA-binding domain"/>
    <property type="match status" value="1"/>
</dbReference>
<keyword id="KW-0067">ATP-binding</keyword>
<keyword id="KW-0235">DNA replication</keyword>
<keyword id="KW-0547">Nucleotide-binding</keyword>
<keyword id="KW-0614">Plasmid</keyword>
<keyword id="KW-1185">Reference proteome</keyword>
<sequence>MGMFERDTEIYLDRDALREDYQPENLVGRDTELNRYRAALQPVINGEQPNNIFLYGKTGVGKTAGTRYLIDHLEEDAAKYEDIDLTVKMLNCDGLSSSYQIATRLVNEFRDETSQISTTGYPRATVYDMLWTELDSCGGTIYIVLDEVDHIEDDSILYQLPRARANDNLSSAKIGIIGISNDFSFRDDLSPKVKSSLCEEEIQFPAYDAKELIQILQQRADVAFHDGVLEDGVIELCAAYGAKDAGDARQSLDLLMKTGDLARDKDTDTISEDLVREARDVLERGRIQEGISGLTQHGHLVVYAMVTLDQEGKTPARTRDIRPRYTNFAEKAGIDPLVPRRMRDHLGELSMLGIISAIERNEGRRGGTYREYSLEMDPEMILAALEKTVDDVGIHKSVTNLVDAEATLSDFQST</sequence>